<proteinExistence type="evidence at transcript level"/>
<organism>
    <name type="scientific">Gallus gallus</name>
    <name type="common">Chicken</name>
    <dbReference type="NCBI Taxonomy" id="9031"/>
    <lineage>
        <taxon>Eukaryota</taxon>
        <taxon>Metazoa</taxon>
        <taxon>Chordata</taxon>
        <taxon>Craniata</taxon>
        <taxon>Vertebrata</taxon>
        <taxon>Euteleostomi</taxon>
        <taxon>Archelosauria</taxon>
        <taxon>Archosauria</taxon>
        <taxon>Dinosauria</taxon>
        <taxon>Saurischia</taxon>
        <taxon>Theropoda</taxon>
        <taxon>Coelurosauria</taxon>
        <taxon>Aves</taxon>
        <taxon>Neognathae</taxon>
        <taxon>Galloanserae</taxon>
        <taxon>Galliformes</taxon>
        <taxon>Phasianidae</taxon>
        <taxon>Phasianinae</taxon>
        <taxon>Gallus</taxon>
    </lineage>
</organism>
<gene>
    <name type="primary">MSX2</name>
    <name type="synonym">HOX8</name>
</gene>
<dbReference type="EMBL" id="S64478">
    <property type="protein sequence ID" value="AAB20018.1"/>
    <property type="molecule type" value="mRNA"/>
</dbReference>
<dbReference type="EMBL" id="X62097">
    <property type="protein sequence ID" value="CAA44007.1"/>
    <property type="molecule type" value="mRNA"/>
</dbReference>
<dbReference type="EMBL" id="X62541">
    <property type="protein sequence ID" value="CAA44425.1"/>
    <property type="molecule type" value="mRNA"/>
</dbReference>
<dbReference type="PIR" id="JS0660">
    <property type="entry name" value="JS0660"/>
</dbReference>
<dbReference type="RefSeq" id="NP_989890.1">
    <property type="nucleotide sequence ID" value="NM_204559.2"/>
</dbReference>
<dbReference type="SMR" id="P28362"/>
<dbReference type="FunCoup" id="P28362">
    <property type="interactions" value="137"/>
</dbReference>
<dbReference type="STRING" id="9031.ENSGALP00000046638"/>
<dbReference type="PaxDb" id="9031-ENSGALP00000040969"/>
<dbReference type="Ensembl" id="ENSGALT00010020124.1">
    <property type="protein sequence ID" value="ENSGALP00010011672.1"/>
    <property type="gene ID" value="ENSGALG00010008416.1"/>
</dbReference>
<dbReference type="GeneID" id="395245"/>
<dbReference type="KEGG" id="gga:395245"/>
<dbReference type="CTD" id="4488"/>
<dbReference type="VEuPathDB" id="HostDB:geneid_395245"/>
<dbReference type="eggNOG" id="KOG0492">
    <property type="taxonomic scope" value="Eukaryota"/>
</dbReference>
<dbReference type="GeneTree" id="ENSGT00940000159824"/>
<dbReference type="HOGENOM" id="CLU_072675_0_0_1"/>
<dbReference type="InParanoid" id="P28362"/>
<dbReference type="OMA" id="PVGYNMY"/>
<dbReference type="OrthoDB" id="6159439at2759"/>
<dbReference type="PhylomeDB" id="P28362"/>
<dbReference type="TreeFam" id="TF350699"/>
<dbReference type="PRO" id="PR:P28362"/>
<dbReference type="Proteomes" id="UP000000539">
    <property type="component" value="Chromosome 13"/>
</dbReference>
<dbReference type="Bgee" id="ENSGALG00000038848">
    <property type="expression patterns" value="Expressed in ovary and 2 other cell types or tissues"/>
</dbReference>
<dbReference type="GO" id="GO:0005829">
    <property type="term" value="C:cytosol"/>
    <property type="evidence" value="ECO:0007669"/>
    <property type="project" value="Ensembl"/>
</dbReference>
<dbReference type="GO" id="GO:0016607">
    <property type="term" value="C:nuclear speck"/>
    <property type="evidence" value="ECO:0007669"/>
    <property type="project" value="Ensembl"/>
</dbReference>
<dbReference type="GO" id="GO:0005634">
    <property type="term" value="C:nucleus"/>
    <property type="evidence" value="ECO:0000318"/>
    <property type="project" value="GO_Central"/>
</dbReference>
<dbReference type="GO" id="GO:0000981">
    <property type="term" value="F:DNA-binding transcription factor activity, RNA polymerase II-specific"/>
    <property type="evidence" value="ECO:0000318"/>
    <property type="project" value="GO_Central"/>
</dbReference>
<dbReference type="GO" id="GO:0000977">
    <property type="term" value="F:RNA polymerase II transcription regulatory region sequence-specific DNA binding"/>
    <property type="evidence" value="ECO:0000318"/>
    <property type="project" value="GO_Central"/>
</dbReference>
<dbReference type="GO" id="GO:0048598">
    <property type="term" value="P:embryonic morphogenesis"/>
    <property type="evidence" value="ECO:0000318"/>
    <property type="project" value="GO_Central"/>
</dbReference>
<dbReference type="GO" id="GO:0000122">
    <property type="term" value="P:negative regulation of transcription by RNA polymerase II"/>
    <property type="evidence" value="ECO:0007669"/>
    <property type="project" value="Ensembl"/>
</dbReference>
<dbReference type="GO" id="GO:0001503">
    <property type="term" value="P:ossification"/>
    <property type="evidence" value="ECO:0007669"/>
    <property type="project" value="UniProtKB-KW"/>
</dbReference>
<dbReference type="GO" id="GO:0006357">
    <property type="term" value="P:regulation of transcription by RNA polymerase II"/>
    <property type="evidence" value="ECO:0000318"/>
    <property type="project" value="GO_Central"/>
</dbReference>
<dbReference type="CDD" id="cd00086">
    <property type="entry name" value="homeodomain"/>
    <property type="match status" value="1"/>
</dbReference>
<dbReference type="FunFam" id="1.10.10.60:FF:000134">
    <property type="entry name" value="Homeobox protein MSX-1"/>
    <property type="match status" value="1"/>
</dbReference>
<dbReference type="Gene3D" id="1.10.10.60">
    <property type="entry name" value="Homeodomain-like"/>
    <property type="match status" value="1"/>
</dbReference>
<dbReference type="InterPro" id="IPR001356">
    <property type="entry name" value="HD"/>
</dbReference>
<dbReference type="InterPro" id="IPR020479">
    <property type="entry name" value="HD_metazoa"/>
</dbReference>
<dbReference type="InterPro" id="IPR017970">
    <property type="entry name" value="Homeobox_CS"/>
</dbReference>
<dbReference type="InterPro" id="IPR009057">
    <property type="entry name" value="Homeodomain-like_sf"/>
</dbReference>
<dbReference type="InterPro" id="IPR050674">
    <property type="entry name" value="Msh_Homeobox_Regulators"/>
</dbReference>
<dbReference type="PANTHER" id="PTHR24338">
    <property type="entry name" value="HOMEOBOX PROTEIN MSX"/>
    <property type="match status" value="1"/>
</dbReference>
<dbReference type="PANTHER" id="PTHR24338:SF10">
    <property type="entry name" value="HOMEOBOX PROTEIN MSX-2"/>
    <property type="match status" value="1"/>
</dbReference>
<dbReference type="Pfam" id="PF00046">
    <property type="entry name" value="Homeodomain"/>
    <property type="match status" value="1"/>
</dbReference>
<dbReference type="PRINTS" id="PR00024">
    <property type="entry name" value="HOMEOBOX"/>
</dbReference>
<dbReference type="SMART" id="SM00389">
    <property type="entry name" value="HOX"/>
    <property type="match status" value="1"/>
</dbReference>
<dbReference type="SUPFAM" id="SSF46689">
    <property type="entry name" value="Homeodomain-like"/>
    <property type="match status" value="1"/>
</dbReference>
<dbReference type="PROSITE" id="PS00027">
    <property type="entry name" value="HOMEOBOX_1"/>
    <property type="match status" value="1"/>
</dbReference>
<dbReference type="PROSITE" id="PS50071">
    <property type="entry name" value="HOMEOBOX_2"/>
    <property type="match status" value="1"/>
</dbReference>
<evidence type="ECO:0000250" key="1"/>
<evidence type="ECO:0000255" key="2">
    <source>
        <dbReference type="PROSITE-ProRule" id="PRU00108"/>
    </source>
</evidence>
<evidence type="ECO:0000256" key="3">
    <source>
        <dbReference type="SAM" id="MobiDB-lite"/>
    </source>
</evidence>
<evidence type="ECO:0000305" key="4"/>
<accession>P28362</accession>
<reference key="1">
    <citation type="journal article" date="1991" name="Mech. Dev.">
        <title>Expression of the chicken homeobox-containing gene GHox-8 during embryonic chick limb development.</title>
        <authorList>
            <person name="Coelho C.N."/>
            <person name="Sumoy L."/>
            <person name="Rodgers B.J."/>
            <person name="Davidson D.R."/>
            <person name="Hill R.E."/>
            <person name="Upholt W.B."/>
            <person name="Kosher R.A."/>
        </authorList>
    </citation>
    <scope>NUCLEOTIDE SEQUENCE [MRNA]</scope>
</reference>
<reference key="2">
    <citation type="journal article" date="1991" name="Development">
        <title>Chicken homeobox gene Msx-1: structure, expression in limb buds and effect of retinoic acid.</title>
        <authorList>
            <person name="Yokouchi Y."/>
            <person name="Ohsugi K."/>
            <person name="Sasaki H."/>
            <person name="Kuroiwa A."/>
        </authorList>
    </citation>
    <scope>NUCLEOTIDE SEQUENCE [MRNA]</scope>
</reference>
<reference key="3">
    <citation type="journal article" date="1991" name="Genes Dev.">
        <title>The apical ectodermal ridge regulates Hox-7 and Hox-8 gene expression in developing chick limb buds.</title>
        <authorList>
            <person name="Robert B."/>
            <person name="Lyons G."/>
            <person name="Simandl B.K."/>
            <person name="Kuroiwa A."/>
            <person name="Buckingham M."/>
        </authorList>
    </citation>
    <scope>NUCLEOTIDE SEQUENCE [MRNA] OF 134-259</scope>
</reference>
<keyword id="KW-0217">Developmental protein</keyword>
<keyword id="KW-0238">DNA-binding</keyword>
<keyword id="KW-0371">Homeobox</keyword>
<keyword id="KW-0539">Nucleus</keyword>
<keyword id="KW-0892">Osteogenesis</keyword>
<keyword id="KW-1185">Reference proteome</keyword>
<keyword id="KW-0804">Transcription</keyword>
<keyword id="KW-0805">Transcription regulation</keyword>
<name>MSX2_CHICK</name>
<feature type="chain" id="PRO_0000049102" description="Homeobox protein MSX-2">
    <location>
        <begin position="1"/>
        <end position="259"/>
    </location>
</feature>
<feature type="DNA-binding region" description="Homeobox" evidence="2">
    <location>
        <begin position="134"/>
        <end position="193"/>
    </location>
</feature>
<feature type="region of interest" description="Disordered" evidence="3">
    <location>
        <begin position="1"/>
        <end position="29"/>
    </location>
</feature>
<feature type="region of interest" description="Disordered" evidence="3">
    <location>
        <begin position="47"/>
        <end position="124"/>
    </location>
</feature>
<feature type="compositionally biased region" description="Basic and acidic residues" evidence="3">
    <location>
        <begin position="1"/>
        <end position="11"/>
    </location>
</feature>
<feature type="compositionally biased region" description="Polar residues" evidence="3">
    <location>
        <begin position="90"/>
        <end position="108"/>
    </location>
</feature>
<feature type="sequence conflict" description="In Ref. 2; CAA44007." evidence="4" ref="2">
    <original>S</original>
    <variation>N</variation>
    <location>
        <position position="58"/>
    </location>
</feature>
<protein>
    <recommendedName>
        <fullName>Homeobox protein MSX-2</fullName>
    </recommendedName>
    <alternativeName>
        <fullName>Homeobox protein Hox-8</fullName>
        <shortName>CHOX-8</shortName>
        <shortName>GHox-8</shortName>
    </alternativeName>
</protein>
<sequence>MASPSKAKEVFSSDEEGPAAGAEEHHKVKVSSLPFSVEALMSDKKPPKELPLAAAGGSADGATVGTSRNLLLPGHGSRDAHSPPGALTKTFDTASVKSENSEDGTSWIQEAGRYSPPPRHLSPTACTLRKHKTNRKPRTPFTTSQLLALERKFRQKQYLSIAERAEFSSSLNLTETQVKIWFQNRRAKAKRLQEAELEKLKMAAKPMLPSGFSLPFPINSPIQAASLYGTSYPFHRPVLPIPPVGLYATPVGYSMYHLS</sequence>
<comment type="function">
    <text evidence="1">Acts as a transcriptional regulator in bone development. Binds to DNA (By similarity). Morphogenetic role.</text>
</comment>
<comment type="subcellular location">
    <subcellularLocation>
        <location>Nucleus</location>
    </subcellularLocation>
</comment>
<comment type="similarity">
    <text evidence="4">Belongs to the Msh homeobox family.</text>
</comment>